<keyword id="KW-0143">Chaperone</keyword>
<keyword id="KW-0963">Cytoplasm</keyword>
<keyword id="KW-0346">Stress response</keyword>
<gene>
    <name evidence="1" type="primary">grpE</name>
    <name type="ordered locus">BF1819</name>
</gene>
<reference key="1">
    <citation type="journal article" date="2005" name="Science">
        <title>Extensive DNA inversions in the B. fragilis genome control variable gene expression.</title>
        <authorList>
            <person name="Cerdeno-Tarraga A.-M."/>
            <person name="Patrick S."/>
            <person name="Crossman L.C."/>
            <person name="Blakely G."/>
            <person name="Abratt V."/>
            <person name="Lennard N."/>
            <person name="Poxton I."/>
            <person name="Duerden B."/>
            <person name="Harris B."/>
            <person name="Quail M.A."/>
            <person name="Barron A."/>
            <person name="Clark L."/>
            <person name="Corton C."/>
            <person name="Doggett J."/>
            <person name="Holden M.T.G."/>
            <person name="Larke N."/>
            <person name="Line A."/>
            <person name="Lord A."/>
            <person name="Norbertczak H."/>
            <person name="Ormond D."/>
            <person name="Price C."/>
            <person name="Rabbinowitsch E."/>
            <person name="Woodward J."/>
            <person name="Barrell B.G."/>
            <person name="Parkhill J."/>
        </authorList>
    </citation>
    <scope>NUCLEOTIDE SEQUENCE [LARGE SCALE GENOMIC DNA]</scope>
    <source>
        <strain>ATCC 25285 / DSM 2151 / CCUG 4856 / JCM 11019 / LMG 10263 / NCTC 9343 / Onslow / VPI 2553 / EN-2</strain>
    </source>
</reference>
<comment type="function">
    <text evidence="1">Participates actively in the response to hyperosmotic and heat shock by preventing the aggregation of stress-denatured proteins, in association with DnaK and GrpE. It is the nucleotide exchange factor for DnaK and may function as a thermosensor. Unfolded proteins bind initially to DnaJ; upon interaction with the DnaJ-bound protein, DnaK hydrolyzes its bound ATP, resulting in the formation of a stable complex. GrpE releases ADP from DnaK; ATP binding to DnaK triggers the release of the substrate protein, thus completing the reaction cycle. Several rounds of ATP-dependent interactions between DnaJ, DnaK and GrpE are required for fully efficient folding.</text>
</comment>
<comment type="subunit">
    <text evidence="1">Homodimer.</text>
</comment>
<comment type="subcellular location">
    <subcellularLocation>
        <location evidence="1">Cytoplasm</location>
    </subcellularLocation>
</comment>
<comment type="similarity">
    <text evidence="1">Belongs to the GrpE family.</text>
</comment>
<evidence type="ECO:0000255" key="1">
    <source>
        <dbReference type="HAMAP-Rule" id="MF_01151"/>
    </source>
</evidence>
<evidence type="ECO:0000256" key="2">
    <source>
        <dbReference type="SAM" id="MobiDB-lite"/>
    </source>
</evidence>
<feature type="chain" id="PRO_1000053540" description="Protein GrpE">
    <location>
        <begin position="1"/>
        <end position="195"/>
    </location>
</feature>
<feature type="region of interest" description="Disordered" evidence="2">
    <location>
        <begin position="1"/>
        <end position="41"/>
    </location>
</feature>
<feature type="compositionally biased region" description="Basic and acidic residues" evidence="2">
    <location>
        <begin position="1"/>
        <end position="18"/>
    </location>
</feature>
<sequence>MDPKEKKTKQEEELKVDDIQDTVEGQSQNEEATEATEPLTAEEKLEKELKEAQAQIEDQKDKYLRLSAEFDNYRKRTVKEKAELILNGGEKSIKSILPVIDDMERALTTMETATDVNAVKEGVELIYNKFLSILSQDGVKVIETKDQPLDTDYHEAIAVIPAPTEEQKGKILDCVQTGYTLNGKVIRHAKVVVGE</sequence>
<accession>Q5LED3</accession>
<protein>
    <recommendedName>
        <fullName evidence="1">Protein GrpE</fullName>
    </recommendedName>
    <alternativeName>
        <fullName evidence="1">HSP-70 cofactor</fullName>
    </alternativeName>
</protein>
<proteinExistence type="inferred from homology"/>
<organism>
    <name type="scientific">Bacteroides fragilis (strain ATCC 25285 / DSM 2151 / CCUG 4856 / JCM 11019 / LMG 10263 / NCTC 9343 / Onslow / VPI 2553 / EN-2)</name>
    <dbReference type="NCBI Taxonomy" id="272559"/>
    <lineage>
        <taxon>Bacteria</taxon>
        <taxon>Pseudomonadati</taxon>
        <taxon>Bacteroidota</taxon>
        <taxon>Bacteroidia</taxon>
        <taxon>Bacteroidales</taxon>
        <taxon>Bacteroidaceae</taxon>
        <taxon>Bacteroides</taxon>
    </lineage>
</organism>
<name>GRPE_BACFN</name>
<dbReference type="EMBL" id="CR626927">
    <property type="protein sequence ID" value="CAH07518.1"/>
    <property type="molecule type" value="Genomic_DNA"/>
</dbReference>
<dbReference type="RefSeq" id="WP_005800555.1">
    <property type="nucleotide sequence ID" value="NZ_UFTH01000001.1"/>
</dbReference>
<dbReference type="SMR" id="Q5LED3"/>
<dbReference type="PaxDb" id="272559-BF9343_1737"/>
<dbReference type="KEGG" id="bfs:BF9343_1737"/>
<dbReference type="eggNOG" id="COG0576">
    <property type="taxonomic scope" value="Bacteria"/>
</dbReference>
<dbReference type="HOGENOM" id="CLU_057217_5_2_10"/>
<dbReference type="Proteomes" id="UP000006731">
    <property type="component" value="Chromosome"/>
</dbReference>
<dbReference type="GO" id="GO:0005737">
    <property type="term" value="C:cytoplasm"/>
    <property type="evidence" value="ECO:0007669"/>
    <property type="project" value="UniProtKB-SubCell"/>
</dbReference>
<dbReference type="GO" id="GO:0000774">
    <property type="term" value="F:adenyl-nucleotide exchange factor activity"/>
    <property type="evidence" value="ECO:0007669"/>
    <property type="project" value="InterPro"/>
</dbReference>
<dbReference type="GO" id="GO:0042803">
    <property type="term" value="F:protein homodimerization activity"/>
    <property type="evidence" value="ECO:0007669"/>
    <property type="project" value="InterPro"/>
</dbReference>
<dbReference type="GO" id="GO:0051087">
    <property type="term" value="F:protein-folding chaperone binding"/>
    <property type="evidence" value="ECO:0007669"/>
    <property type="project" value="InterPro"/>
</dbReference>
<dbReference type="GO" id="GO:0051082">
    <property type="term" value="F:unfolded protein binding"/>
    <property type="evidence" value="ECO:0007669"/>
    <property type="project" value="TreeGrafter"/>
</dbReference>
<dbReference type="GO" id="GO:0006457">
    <property type="term" value="P:protein folding"/>
    <property type="evidence" value="ECO:0007669"/>
    <property type="project" value="InterPro"/>
</dbReference>
<dbReference type="CDD" id="cd00446">
    <property type="entry name" value="GrpE"/>
    <property type="match status" value="1"/>
</dbReference>
<dbReference type="Gene3D" id="3.90.20.20">
    <property type="match status" value="1"/>
</dbReference>
<dbReference type="Gene3D" id="2.30.22.10">
    <property type="entry name" value="Head domain of nucleotide exchange factor GrpE"/>
    <property type="match status" value="1"/>
</dbReference>
<dbReference type="HAMAP" id="MF_01151">
    <property type="entry name" value="GrpE"/>
    <property type="match status" value="1"/>
</dbReference>
<dbReference type="InterPro" id="IPR000740">
    <property type="entry name" value="GrpE"/>
</dbReference>
<dbReference type="InterPro" id="IPR013805">
    <property type="entry name" value="GrpE_coiled_coil"/>
</dbReference>
<dbReference type="InterPro" id="IPR009012">
    <property type="entry name" value="GrpE_head"/>
</dbReference>
<dbReference type="PANTHER" id="PTHR21237">
    <property type="entry name" value="GRPE PROTEIN"/>
    <property type="match status" value="1"/>
</dbReference>
<dbReference type="PANTHER" id="PTHR21237:SF23">
    <property type="entry name" value="GRPE PROTEIN HOMOLOG, MITOCHONDRIAL"/>
    <property type="match status" value="1"/>
</dbReference>
<dbReference type="Pfam" id="PF01025">
    <property type="entry name" value="GrpE"/>
    <property type="match status" value="1"/>
</dbReference>
<dbReference type="PRINTS" id="PR00773">
    <property type="entry name" value="GRPEPROTEIN"/>
</dbReference>
<dbReference type="SUPFAM" id="SSF58014">
    <property type="entry name" value="Coiled-coil domain of nucleotide exchange factor GrpE"/>
    <property type="match status" value="1"/>
</dbReference>
<dbReference type="SUPFAM" id="SSF51064">
    <property type="entry name" value="Head domain of nucleotide exchange factor GrpE"/>
    <property type="match status" value="1"/>
</dbReference>